<sequence length="253" mass="27840">MRLKGVLALFSFFTAIPIKSNASLEEIAEYSYISPLIIGISLALIESAVYVLLYRILEALAGIVLLGVVELLRGFNHLDGLLDLGDALMIKGDRERKIKALKDVEIGSGGIGLLLVYLSIQIVALLKLGFSFYTIFHLISSNVLSMTIGLYILSTISPIPESNLGKIFHNKLKGKSTVLLLELIPFISLYNIIVFLVFYMIMHKICRSLGGSSGDIAGASITLSFPLFLLTNEITNLNYSLLSILCYLFLHLH</sequence>
<name>COBS_SACI1</name>
<accession>C3NMG6</accession>
<gene>
    <name evidence="1" type="primary">cobS</name>
    <name type="ordered locus">YN1551_0657</name>
</gene>
<keyword id="KW-1003">Cell membrane</keyword>
<keyword id="KW-0169">Cobalamin biosynthesis</keyword>
<keyword id="KW-0460">Magnesium</keyword>
<keyword id="KW-0472">Membrane</keyword>
<keyword id="KW-0808">Transferase</keyword>
<keyword id="KW-0812">Transmembrane</keyword>
<keyword id="KW-1133">Transmembrane helix</keyword>
<comment type="function">
    <text evidence="1">Joins adenosylcobinamide-GDP and alpha-ribazole to generate adenosylcobalamin (Ado-cobalamin). Also synthesizes adenosylcobalamin 5'-phosphate from adenosylcobinamide-GDP and alpha-ribazole 5'-phosphate.</text>
</comment>
<comment type="catalytic activity">
    <reaction evidence="1">
        <text>alpha-ribazole + adenosylcob(III)inamide-GDP = adenosylcob(III)alamin + GMP + H(+)</text>
        <dbReference type="Rhea" id="RHEA:16049"/>
        <dbReference type="ChEBI" id="CHEBI:10329"/>
        <dbReference type="ChEBI" id="CHEBI:15378"/>
        <dbReference type="ChEBI" id="CHEBI:18408"/>
        <dbReference type="ChEBI" id="CHEBI:58115"/>
        <dbReference type="ChEBI" id="CHEBI:60487"/>
        <dbReference type="EC" id="2.7.8.26"/>
    </reaction>
</comment>
<comment type="catalytic activity">
    <reaction evidence="1">
        <text>alpha-ribazole 5'-phosphate + adenosylcob(III)inamide-GDP = adenosylcob(III)alamin 5'-phosphate + GMP + H(+)</text>
        <dbReference type="Rhea" id="RHEA:23560"/>
        <dbReference type="ChEBI" id="CHEBI:15378"/>
        <dbReference type="ChEBI" id="CHEBI:57918"/>
        <dbReference type="ChEBI" id="CHEBI:58115"/>
        <dbReference type="ChEBI" id="CHEBI:60487"/>
        <dbReference type="ChEBI" id="CHEBI:60493"/>
        <dbReference type="EC" id="2.7.8.26"/>
    </reaction>
</comment>
<comment type="cofactor">
    <cofactor evidence="1">
        <name>Mg(2+)</name>
        <dbReference type="ChEBI" id="CHEBI:18420"/>
    </cofactor>
</comment>
<comment type="pathway">
    <text evidence="1">Cofactor biosynthesis; adenosylcobalamin biosynthesis; adenosylcobalamin from cob(II)yrinate a,c-diamide: step 7/7.</text>
</comment>
<comment type="subcellular location">
    <subcellularLocation>
        <location evidence="1">Cell membrane</location>
        <topology evidence="1">Multi-pass membrane protein</topology>
    </subcellularLocation>
</comment>
<comment type="similarity">
    <text evidence="1">Belongs to the CobS family.</text>
</comment>
<dbReference type="EC" id="2.7.8.26" evidence="1"/>
<dbReference type="EMBL" id="CP001404">
    <property type="protein sequence ID" value="ACP47786.1"/>
    <property type="molecule type" value="Genomic_DNA"/>
</dbReference>
<dbReference type="RefSeq" id="WP_012714214.1">
    <property type="nucleotide sequence ID" value="NC_012623.1"/>
</dbReference>
<dbReference type="GeneID" id="7809007"/>
<dbReference type="KEGG" id="sin:YN1551_0657"/>
<dbReference type="HOGENOM" id="CLU_057426_2_0_2"/>
<dbReference type="UniPathway" id="UPA00148">
    <property type="reaction ID" value="UER00238"/>
</dbReference>
<dbReference type="Proteomes" id="UP000006818">
    <property type="component" value="Chromosome"/>
</dbReference>
<dbReference type="GO" id="GO:0005886">
    <property type="term" value="C:plasma membrane"/>
    <property type="evidence" value="ECO:0007669"/>
    <property type="project" value="UniProtKB-SubCell"/>
</dbReference>
<dbReference type="GO" id="GO:0051073">
    <property type="term" value="F:adenosylcobinamide-GDP ribazoletransferase activity"/>
    <property type="evidence" value="ECO:0007669"/>
    <property type="project" value="UniProtKB-UniRule"/>
</dbReference>
<dbReference type="GO" id="GO:0008818">
    <property type="term" value="F:cobalamin 5'-phosphate synthase activity"/>
    <property type="evidence" value="ECO:0007669"/>
    <property type="project" value="UniProtKB-UniRule"/>
</dbReference>
<dbReference type="GO" id="GO:0009236">
    <property type="term" value="P:cobalamin biosynthetic process"/>
    <property type="evidence" value="ECO:0007669"/>
    <property type="project" value="UniProtKB-UniRule"/>
</dbReference>
<dbReference type="HAMAP" id="MF_00719">
    <property type="entry name" value="CobS"/>
    <property type="match status" value="1"/>
</dbReference>
<dbReference type="InterPro" id="IPR003805">
    <property type="entry name" value="CobS"/>
</dbReference>
<dbReference type="NCBIfam" id="TIGR00317">
    <property type="entry name" value="cobS"/>
    <property type="match status" value="1"/>
</dbReference>
<dbReference type="PANTHER" id="PTHR34148">
    <property type="entry name" value="ADENOSYLCOBINAMIDE-GDP RIBAZOLETRANSFERASE"/>
    <property type="match status" value="1"/>
</dbReference>
<dbReference type="PANTHER" id="PTHR34148:SF1">
    <property type="entry name" value="ADENOSYLCOBINAMIDE-GDP RIBAZOLETRANSFERASE"/>
    <property type="match status" value="1"/>
</dbReference>
<dbReference type="Pfam" id="PF02654">
    <property type="entry name" value="CobS"/>
    <property type="match status" value="1"/>
</dbReference>
<evidence type="ECO:0000255" key="1">
    <source>
        <dbReference type="HAMAP-Rule" id="MF_00719"/>
    </source>
</evidence>
<proteinExistence type="inferred from homology"/>
<protein>
    <recommendedName>
        <fullName evidence="1">Adenosylcobinamide-GDP ribazoletransferase</fullName>
        <ecNumber evidence="1">2.7.8.26</ecNumber>
    </recommendedName>
    <alternativeName>
        <fullName evidence="1">Cobalamin synthase</fullName>
    </alternativeName>
    <alternativeName>
        <fullName evidence="1">Cobalamin-5'-phosphate synthase</fullName>
    </alternativeName>
</protein>
<feature type="chain" id="PRO_1000212700" description="Adenosylcobinamide-GDP ribazoletransferase">
    <location>
        <begin position="1"/>
        <end position="253"/>
    </location>
</feature>
<feature type="transmembrane region" description="Helical" evidence="1">
    <location>
        <begin position="33"/>
        <end position="53"/>
    </location>
</feature>
<feature type="transmembrane region" description="Helical" evidence="1">
    <location>
        <begin position="106"/>
        <end position="126"/>
    </location>
</feature>
<feature type="transmembrane region" description="Helical" evidence="1">
    <location>
        <begin position="132"/>
        <end position="152"/>
    </location>
</feature>
<feature type="transmembrane region" description="Helical" evidence="1">
    <location>
        <begin position="178"/>
        <end position="198"/>
    </location>
</feature>
<organism>
    <name type="scientific">Saccharolobus islandicus (strain Y.N.15.51 / Yellowstone #2)</name>
    <name type="common">Sulfolobus islandicus</name>
    <dbReference type="NCBI Taxonomy" id="419942"/>
    <lineage>
        <taxon>Archaea</taxon>
        <taxon>Thermoproteota</taxon>
        <taxon>Thermoprotei</taxon>
        <taxon>Sulfolobales</taxon>
        <taxon>Sulfolobaceae</taxon>
        <taxon>Saccharolobus</taxon>
    </lineage>
</organism>
<reference key="1">
    <citation type="journal article" date="2009" name="Proc. Natl. Acad. Sci. U.S.A.">
        <title>Biogeography of the Sulfolobus islandicus pan-genome.</title>
        <authorList>
            <person name="Reno M.L."/>
            <person name="Held N.L."/>
            <person name="Fields C.J."/>
            <person name="Burke P.V."/>
            <person name="Whitaker R.J."/>
        </authorList>
    </citation>
    <scope>NUCLEOTIDE SEQUENCE [LARGE SCALE GENOMIC DNA]</scope>
    <source>
        <strain>Y.N.15.51 / Yellowstone #2</strain>
    </source>
</reference>